<organismHost>
    <name type="scientific">Aves</name>
    <dbReference type="NCBI Taxonomy" id="8782"/>
</organismHost>
<organismHost>
    <name type="scientific">Homo sapiens</name>
    <name type="common">Human</name>
    <dbReference type="NCBI Taxonomy" id="9606"/>
</organismHost>
<organismHost>
    <name type="scientific">Sus scrofa</name>
    <name type="common">Pig</name>
    <dbReference type="NCBI Taxonomy" id="9823"/>
</organismHost>
<keyword id="KW-1157">Cap snatching</keyword>
<keyword id="KW-1262">Eukaryotic host gene expression shutoff by virus</keyword>
<keyword id="KW-1191">Eukaryotic host transcription shutoff by virus</keyword>
<keyword id="KW-1190">Host gene expression shutoff by virus</keyword>
<keyword id="KW-1045">Host mitochondrion</keyword>
<keyword id="KW-1048">Host nucleus</keyword>
<keyword id="KW-0945">Host-virus interaction</keyword>
<keyword id="KW-1090">Inhibition of host innate immune response by virus</keyword>
<keyword id="KW-1097">Inhibition of host MAVS by virus</keyword>
<keyword id="KW-1113">Inhibition of host RLR pathway by virus</keyword>
<keyword id="KW-1104">Inhibition of host RNA polymerase II by virus</keyword>
<keyword id="KW-0506">mRNA capping</keyword>
<keyword id="KW-0507">mRNA processing</keyword>
<keyword id="KW-0899">Viral immunoevasion</keyword>
<keyword id="KW-1195">Viral transcription</keyword>
<keyword id="KW-0946">Virion</keyword>
<organism>
    <name type="scientific">Influenza A virus (strain A/China:Nanchang/11/1996 H1N1)</name>
    <dbReference type="NCBI Taxonomy" id="394786"/>
    <lineage>
        <taxon>Viruses</taxon>
        <taxon>Riboviria</taxon>
        <taxon>Orthornavirae</taxon>
        <taxon>Negarnaviricota</taxon>
        <taxon>Polyploviricotina</taxon>
        <taxon>Insthoviricetes</taxon>
        <taxon>Articulavirales</taxon>
        <taxon>Orthomyxoviridae</taxon>
        <taxon>Alphainfluenzavirus</taxon>
        <taxon>Alphainfluenzavirus influenzae</taxon>
        <taxon>Influenza A virus</taxon>
    </lineage>
</organism>
<protein>
    <recommendedName>
        <fullName evidence="1">Polymerase basic protein 2</fullName>
    </recommendedName>
    <alternativeName>
        <fullName evidence="1">RNA-directed RNA polymerase subunit P3</fullName>
    </alternativeName>
</protein>
<evidence type="ECO:0000255" key="1">
    <source>
        <dbReference type="HAMAP-Rule" id="MF_04062"/>
    </source>
</evidence>
<feature type="chain" id="PRO_0000373042" description="Polymerase basic protein 2">
    <location>
        <begin position="1"/>
        <end position="759"/>
    </location>
</feature>
<feature type="short sequence motif" description="Nuclear localization signal" evidence="1">
    <location>
        <begin position="736"/>
        <end position="739"/>
    </location>
</feature>
<feature type="site" description="Mammalian adaptation" evidence="1">
    <location>
        <position position="627"/>
    </location>
</feature>
<gene>
    <name evidence="1" type="primary">PB2</name>
</gene>
<name>PB2_I96A3</name>
<sequence length="759" mass="85934">MERIKELRNLMSQSRTREILTKTTVDHMAIIKKYTSGRQEKNPSLRMKWMMAMKYPITADKKITEMIPERNEQGQTLWSKVNDAGSDRVMISPLAVTWWNRNGPVASTIHYPKIYKTYFEKVERLKHGTFGPVHFRNQVKIRRRVDINPGHADLSAKEAQDVIMEVVFPNEVGARILTSESQLTITKEKKEELQNCKISPLMVAYMLERELVRKTRFLPVAGGTSSVYIEVLHLTQGTCWEQMYTPGGEVRNDDVDQSLIIAARNIVRRAAVSADPLASLLEMCHSTQIGGTRMVDILRQNPTEEQAVDICKAAMGLRISSSFSFGGFTFKRTSGSSVKREEEVLTGNLQTLKLNVHEGYEEFTMVGKRATAILRKATRRLIQLIVSGRDEQSIVEAIVVAMVFSQEDCMVKAVRGDLNFVNRANQRLNPMHQLLRHFQKDAKVLFLNWGIEPIDNVMGMIGILPDMTPSTEMSMRGVRVSKMGVDEYSNAERVVVSIDRFLRVRDQRGNVLLSPEEVSETQGTEKLTITYSSSMMWEINGPESVLINTYQWIIRNWETVKIQWSQNPTMLYNKMEFEPFQSLVPKAIRGQYSGFVRTLFQQMRDVLGTFDTTQIIKLLPFAAAPPKQSRMQFSSLTVNVRGSGMRILVRGNSPIFNYNKTTKRLTVLGKDAGTLTEDPDEGTAGVESAVLRGFLILGKEDRRYGPALSINELSNLAKGEKANVLIGQGDVVLVMKRKRDSSILTDSQTATKRIRMAIN</sequence>
<accession>Q07FH5</accession>
<reference key="1">
    <citation type="submission" date="2006-09" db="EMBL/GenBank/DDBJ databases">
        <title>The NIAID influenza genome sequencing project.</title>
        <authorList>
            <person name="Ghedin E."/>
            <person name="Spiro D."/>
            <person name="Miller N."/>
            <person name="Zaborsky J."/>
            <person name="Feldblyum T."/>
            <person name="Subbu V."/>
            <person name="Shumway M."/>
            <person name="Sparenborg J."/>
            <person name="Groveman L."/>
            <person name="Halpin R."/>
            <person name="Sitz J."/>
            <person name="Koo H."/>
            <person name="Salzberg S.L."/>
            <person name="Webster R.G."/>
            <person name="Hoffmann E."/>
            <person name="Krauss S."/>
            <person name="Naeve C."/>
            <person name="Bao Y."/>
            <person name="Bolotov P."/>
            <person name="Dernovoy D."/>
            <person name="Kiryutin B."/>
            <person name="Lipman D.J."/>
            <person name="Tatusova T."/>
        </authorList>
    </citation>
    <scope>NUCLEOTIDE SEQUENCE [GENOMIC RNA]</scope>
</reference>
<reference key="2">
    <citation type="submission" date="2006-09" db="EMBL/GenBank/DDBJ databases">
        <authorList>
            <consortium name="The NIAID Influenza Genome Sequencing Consortium"/>
        </authorList>
    </citation>
    <scope>NUCLEOTIDE SEQUENCE [GENOMIC RNA]</scope>
</reference>
<proteinExistence type="inferred from homology"/>
<dbReference type="EMBL" id="CY016243">
    <property type="protein sequence ID" value="ABI95271.1"/>
    <property type="molecule type" value="Other_RNA"/>
</dbReference>
<dbReference type="SMR" id="Q07FH5"/>
<dbReference type="PRO" id="PR:Q07FH5"/>
<dbReference type="Proteomes" id="UP000008586">
    <property type="component" value="Genome"/>
</dbReference>
<dbReference type="GO" id="GO:0033650">
    <property type="term" value="C:host cell mitochondrion"/>
    <property type="evidence" value="ECO:0007669"/>
    <property type="project" value="UniProtKB-SubCell"/>
</dbReference>
<dbReference type="GO" id="GO:0042025">
    <property type="term" value="C:host cell nucleus"/>
    <property type="evidence" value="ECO:0007669"/>
    <property type="project" value="UniProtKB-SubCell"/>
</dbReference>
<dbReference type="GO" id="GO:0044423">
    <property type="term" value="C:virion component"/>
    <property type="evidence" value="ECO:0007669"/>
    <property type="project" value="UniProtKB-UniRule"/>
</dbReference>
<dbReference type="GO" id="GO:0003723">
    <property type="term" value="F:RNA binding"/>
    <property type="evidence" value="ECO:0007669"/>
    <property type="project" value="UniProtKB-UniRule"/>
</dbReference>
<dbReference type="GO" id="GO:0003968">
    <property type="term" value="F:RNA-directed RNA polymerase activity"/>
    <property type="evidence" value="ECO:0007669"/>
    <property type="project" value="UniProtKB-UniRule"/>
</dbReference>
<dbReference type="GO" id="GO:0006370">
    <property type="term" value="P:7-methylguanosine mRNA capping"/>
    <property type="evidence" value="ECO:0007669"/>
    <property type="project" value="UniProtKB-UniRule"/>
</dbReference>
<dbReference type="GO" id="GO:0075526">
    <property type="term" value="P:cap snatching"/>
    <property type="evidence" value="ECO:0007669"/>
    <property type="project" value="UniProtKB-UniRule"/>
</dbReference>
<dbReference type="GO" id="GO:0006351">
    <property type="term" value="P:DNA-templated transcription"/>
    <property type="evidence" value="ECO:0007669"/>
    <property type="project" value="UniProtKB-UniRule"/>
</dbReference>
<dbReference type="GO" id="GO:0039545">
    <property type="term" value="P:symbiont-mediated suppression of host cytoplasmic pattern recognition receptor signaling pathway via inhibition of MAVS activity"/>
    <property type="evidence" value="ECO:0007669"/>
    <property type="project" value="UniProtKB-UniRule"/>
</dbReference>
<dbReference type="GO" id="GO:0039657">
    <property type="term" value="P:symbiont-mediated suppression of host gene expression"/>
    <property type="evidence" value="ECO:0007669"/>
    <property type="project" value="UniProtKB-KW"/>
</dbReference>
<dbReference type="GO" id="GO:0039523">
    <property type="term" value="P:symbiont-mediated suppression of host mRNA transcription via inhibition of RNA polymerase II activity"/>
    <property type="evidence" value="ECO:0007669"/>
    <property type="project" value="UniProtKB-UniRule"/>
</dbReference>
<dbReference type="GO" id="GO:0039694">
    <property type="term" value="P:viral RNA genome replication"/>
    <property type="evidence" value="ECO:0007669"/>
    <property type="project" value="InterPro"/>
</dbReference>
<dbReference type="FunFam" id="3.30.30.90:FF:000001">
    <property type="entry name" value="Polymerase basic protein 2"/>
    <property type="match status" value="1"/>
</dbReference>
<dbReference type="Gene3D" id="3.30.30.90">
    <property type="entry name" value="Polymerase Basic Protein 2, C-terminal domain"/>
    <property type="match status" value="1"/>
</dbReference>
<dbReference type="HAMAP" id="MF_04062">
    <property type="entry name" value="INV_PB2"/>
    <property type="match status" value="1"/>
</dbReference>
<dbReference type="InterPro" id="IPR049110">
    <property type="entry name" value="Flu_PB2_2nd"/>
</dbReference>
<dbReference type="InterPro" id="IPR049114">
    <property type="entry name" value="Flu_PB2_6th"/>
</dbReference>
<dbReference type="InterPro" id="IPR049115">
    <property type="entry name" value="Flu_PB2_C"/>
</dbReference>
<dbReference type="InterPro" id="IPR048298">
    <property type="entry name" value="Flu_PB2_CAP-bd"/>
</dbReference>
<dbReference type="InterPro" id="IPR049111">
    <property type="entry name" value="Flu_PB2_middle"/>
</dbReference>
<dbReference type="InterPro" id="IPR049106">
    <property type="entry name" value="Flu_PB2_N"/>
</dbReference>
<dbReference type="InterPro" id="IPR001591">
    <property type="entry name" value="INV_PB2"/>
</dbReference>
<dbReference type="InterPro" id="IPR049113">
    <property type="entry name" value="PB2_helical"/>
</dbReference>
<dbReference type="InterPro" id="IPR037258">
    <property type="entry name" value="PDB2_C"/>
</dbReference>
<dbReference type="Pfam" id="PF20947">
    <property type="entry name" value="Flu_PB2_1st"/>
    <property type="match status" value="1"/>
</dbReference>
<dbReference type="Pfam" id="PF20948">
    <property type="entry name" value="Flu_PB2_2nd"/>
    <property type="match status" value="1"/>
</dbReference>
<dbReference type="Pfam" id="PF20949">
    <property type="entry name" value="Flu_PB2_3rd"/>
    <property type="match status" value="1"/>
</dbReference>
<dbReference type="Pfam" id="PF20950">
    <property type="entry name" value="Flu_PB2_4th"/>
    <property type="match status" value="1"/>
</dbReference>
<dbReference type="Pfam" id="PF00604">
    <property type="entry name" value="Flu_PB2_5th"/>
    <property type="match status" value="1"/>
</dbReference>
<dbReference type="Pfam" id="PF20951">
    <property type="entry name" value="Flu_PB2_6th"/>
    <property type="match status" value="1"/>
</dbReference>
<dbReference type="Pfam" id="PF20952">
    <property type="entry name" value="Flu_PB2_7th"/>
    <property type="match status" value="1"/>
</dbReference>
<dbReference type="SUPFAM" id="SSF160453">
    <property type="entry name" value="PB2 C-terminal domain-like"/>
    <property type="match status" value="1"/>
</dbReference>
<comment type="function">
    <text evidence="1">Plays an essential role in transcription initiation and cap-stealing mechanism, in which cellular capped pre-mRNAs are used to generate primers for viral transcription. Recognizes and binds the 7-methylguanosine-containing cap of the target pre-RNA which is subsequently cleaved after 10-13 nucleotides by the viral protein PA. Plays a role in the initiation of the viral genome replication and modulates the activity of the ribonucleoprotein (RNP) complex. In addition, participates in the inhibition of type I interferon induction through interaction with and inhibition of the host mitochondrial antiviral signaling protein MAVS.</text>
</comment>
<comment type="subunit">
    <text evidence="1">Influenza RNA polymerase is composed of three subunits: PB1, PB2 and PA. Interacts (via N-terminus) with PB1 (via C-terminus). Interacts with nucleoprotein NP (via N-terminus). Interacts (via N-terminus) with host MAVS (via N-terminus); this interaction inhibits host innate immune response.</text>
</comment>
<comment type="subcellular location">
    <subcellularLocation>
        <location evidence="1">Virion</location>
    </subcellularLocation>
    <subcellularLocation>
        <location evidence="1">Host nucleus</location>
    </subcellularLocation>
    <subcellularLocation>
        <location evidence="1">Host mitochondrion</location>
    </subcellularLocation>
</comment>
<comment type="similarity">
    <text evidence="1">Belongs to the influenza viruses PB2 family.</text>
</comment>